<reference key="1">
    <citation type="submission" date="1999-05" db="EMBL/GenBank/DDBJ databases">
        <authorList>
            <person name="Lee J.-S."/>
            <person name="Kim Y.-S."/>
            <person name="Sung S.-H."/>
            <person name="Hwang J.-S."/>
            <person name="Lee D.-S."/>
            <person name="Suh D.-S."/>
        </authorList>
    </citation>
    <scope>NUCLEOTIDE SEQUENCE [GENOMIC DNA]</scope>
    <source>
        <strain>Backokjam</strain>
        <tissue>Posterior silk gland</tissue>
    </source>
</reference>
<reference key="2">
    <citation type="submission" date="1999-11" db="EMBL/GenBank/DDBJ databases">
        <title>Bombyx mori mitochondrial cytochrome c oxidase subunit II, tRNA-Lys, tRNA-Asp, and ATP synthase F0 subunit 8 genes.</title>
        <authorList>
            <person name="Shen X.J."/>
            <person name="Zhao Q."/>
            <person name="Zhang Z."/>
            <person name="He J."/>
            <person name="Li Y."/>
        </authorList>
    </citation>
    <scope>NUCLEOTIDE SEQUENCE [GENOMIC DNA]</scope>
</reference>
<geneLocation type="mitochondrion"/>
<feature type="chain" id="PRO_0000195494" description="ATP synthase protein 8">
    <location>
        <begin position="1"/>
        <end position="53"/>
    </location>
</feature>
<feature type="transmembrane region" description="Helical" evidence="2">
    <location>
        <begin position="9"/>
        <end position="29"/>
    </location>
</feature>
<keyword id="KW-0066">ATP synthesis</keyword>
<keyword id="KW-0138">CF(0)</keyword>
<keyword id="KW-0375">Hydrogen ion transport</keyword>
<keyword id="KW-0406">Ion transport</keyword>
<keyword id="KW-0472">Membrane</keyword>
<keyword id="KW-0496">Mitochondrion</keyword>
<keyword id="KW-1185">Reference proteome</keyword>
<keyword id="KW-0812">Transmembrane</keyword>
<keyword id="KW-1133">Transmembrane helix</keyword>
<keyword id="KW-0813">Transport</keyword>
<comment type="function">
    <text evidence="1">Mitochondrial membrane ATP synthase (F(1)F(0) ATP synthase or Complex V) produces ATP from ADP in the presence of a proton gradient across the membrane which is generated by electron transport complexes of the respiratory chain. F-type ATPases consist of two structural domains, F(1) - containing the extramembraneous catalytic core and F(0) - containing the membrane proton channel, linked together by a central stalk and a peripheral stalk. During catalysis, ATP synthesis in the catalytic domain of F(1) is coupled via a rotary mechanism of the central stalk subunits to proton translocation. Part of the complex F(0) domain. Minor subunit located with subunit a in the membrane (By similarity).</text>
</comment>
<comment type="subunit">
    <text evidence="1">F-type ATPases have 2 components, CF(1) - the catalytic core - and CF(0) - the membrane proton channel.</text>
</comment>
<comment type="subcellular location">
    <subcellularLocation>
        <location>Mitochondrion membrane</location>
        <topology>Single-pass membrane protein</topology>
    </subcellularLocation>
</comment>
<comment type="similarity">
    <text evidence="3">Belongs to the ATPase protein 8 family.</text>
</comment>
<dbReference type="EMBL" id="AF149768">
    <property type="protein sequence ID" value="AAF73767.1"/>
    <property type="molecule type" value="Genomic_DNA"/>
</dbReference>
<dbReference type="EMBL" id="AF208546">
    <property type="protein sequence ID" value="AAF33753.1"/>
    <property type="molecule type" value="Genomic_DNA"/>
</dbReference>
<dbReference type="RefSeq" id="NP_059478.1">
    <property type="nucleotide sequence ID" value="NC_002355.1"/>
</dbReference>
<dbReference type="SMR" id="Q9ME79"/>
<dbReference type="FunCoup" id="Q9ME79">
    <property type="interactions" value="85"/>
</dbReference>
<dbReference type="EnsemblMetazoa" id="GeneID_809268_df_mr">
    <property type="protein sequence ID" value="NP_059478.1"/>
    <property type="gene ID" value="GeneID_809268"/>
</dbReference>
<dbReference type="GeneID" id="809268"/>
<dbReference type="KEGG" id="bmor:809268"/>
<dbReference type="CTD" id="4509"/>
<dbReference type="InParanoid" id="Q9ME79"/>
<dbReference type="Proteomes" id="UP000005204">
    <property type="component" value="Unassembled WGS sequence"/>
</dbReference>
<dbReference type="GO" id="GO:0031966">
    <property type="term" value="C:mitochondrial membrane"/>
    <property type="evidence" value="ECO:0007669"/>
    <property type="project" value="UniProtKB-SubCell"/>
</dbReference>
<dbReference type="GO" id="GO:0045259">
    <property type="term" value="C:proton-transporting ATP synthase complex"/>
    <property type="evidence" value="ECO:0007669"/>
    <property type="project" value="UniProtKB-KW"/>
</dbReference>
<dbReference type="GO" id="GO:0015078">
    <property type="term" value="F:proton transmembrane transporter activity"/>
    <property type="evidence" value="ECO:0007669"/>
    <property type="project" value="InterPro"/>
</dbReference>
<dbReference type="GO" id="GO:0015986">
    <property type="term" value="P:proton motive force-driven ATP synthesis"/>
    <property type="evidence" value="ECO:0007669"/>
    <property type="project" value="InterPro"/>
</dbReference>
<dbReference type="InterPro" id="IPR001421">
    <property type="entry name" value="ATP8_metazoa"/>
</dbReference>
<dbReference type="Pfam" id="PF00895">
    <property type="entry name" value="ATP-synt_8"/>
    <property type="match status" value="1"/>
</dbReference>
<evidence type="ECO:0000250" key="1"/>
<evidence type="ECO:0000255" key="2"/>
<evidence type="ECO:0000305" key="3"/>
<accession>Q9ME79</accession>
<protein>
    <recommendedName>
        <fullName>ATP synthase protein 8</fullName>
    </recommendedName>
    <alternativeName>
        <fullName>A6L</fullName>
    </alternativeName>
    <alternativeName>
        <fullName>F-ATPase subunit 8</fullName>
    </alternativeName>
</protein>
<name>ATP8_BOMMO</name>
<sequence>MPQMMPINWIFFLFFFICIFLIFNIMNYFIYEKKMHLINKFNQKKKLTFNWKW</sequence>
<organism>
    <name type="scientific">Bombyx mori</name>
    <name type="common">Silk moth</name>
    <dbReference type="NCBI Taxonomy" id="7091"/>
    <lineage>
        <taxon>Eukaryota</taxon>
        <taxon>Metazoa</taxon>
        <taxon>Ecdysozoa</taxon>
        <taxon>Arthropoda</taxon>
        <taxon>Hexapoda</taxon>
        <taxon>Insecta</taxon>
        <taxon>Pterygota</taxon>
        <taxon>Neoptera</taxon>
        <taxon>Endopterygota</taxon>
        <taxon>Lepidoptera</taxon>
        <taxon>Glossata</taxon>
        <taxon>Ditrysia</taxon>
        <taxon>Bombycoidea</taxon>
        <taxon>Bombycidae</taxon>
        <taxon>Bombycinae</taxon>
        <taxon>Bombyx</taxon>
    </lineage>
</organism>
<gene>
    <name type="primary">mt:ATPase8</name>
    <name type="synonym">ATP8</name>
    <name type="synonym">ATPASE8</name>
    <name type="synonym">MTATP8</name>
</gene>
<proteinExistence type="inferred from homology"/>